<feature type="chain" id="PRO_0000253152" description="Putative membrane protein insertion efficiency factor">
    <location>
        <begin position="1"/>
        <end position="84"/>
    </location>
</feature>
<feature type="region of interest" description="Disordered" evidence="2">
    <location>
        <begin position="63"/>
        <end position="84"/>
    </location>
</feature>
<feature type="compositionally biased region" description="Basic and acidic residues" evidence="2">
    <location>
        <begin position="75"/>
        <end position="84"/>
    </location>
</feature>
<protein>
    <recommendedName>
        <fullName evidence="1">Putative membrane protein insertion efficiency factor</fullName>
    </recommendedName>
</protein>
<organism>
    <name type="scientific">Cereibacter sphaeroides (strain ATCC 17023 / DSM 158 / JCM 6121 / CCUG 31486 / LMG 2827 / NBRC 12203 / NCIMB 8253 / ATH 2.4.1.)</name>
    <name type="common">Rhodobacter sphaeroides</name>
    <dbReference type="NCBI Taxonomy" id="272943"/>
    <lineage>
        <taxon>Bacteria</taxon>
        <taxon>Pseudomonadati</taxon>
        <taxon>Pseudomonadota</taxon>
        <taxon>Alphaproteobacteria</taxon>
        <taxon>Rhodobacterales</taxon>
        <taxon>Paracoccaceae</taxon>
        <taxon>Cereibacter</taxon>
    </lineage>
</organism>
<keyword id="KW-0997">Cell inner membrane</keyword>
<keyword id="KW-1003">Cell membrane</keyword>
<keyword id="KW-0472">Membrane</keyword>
<keyword id="KW-1185">Reference proteome</keyword>
<dbReference type="EMBL" id="CP000143">
    <property type="protein sequence ID" value="ABA80245.1"/>
    <property type="molecule type" value="Genomic_DNA"/>
</dbReference>
<dbReference type="RefSeq" id="YP_354146.1">
    <property type="nucleotide sequence ID" value="NC_007493.2"/>
</dbReference>
<dbReference type="STRING" id="272943.RSP_1061"/>
<dbReference type="EnsemblBacteria" id="ABA80245">
    <property type="protein sequence ID" value="ABA80245"/>
    <property type="gene ID" value="RSP_1061"/>
</dbReference>
<dbReference type="KEGG" id="rsp:RSP_1061"/>
<dbReference type="PATRIC" id="fig|272943.9.peg.3035"/>
<dbReference type="eggNOG" id="COG0759">
    <property type="taxonomic scope" value="Bacteria"/>
</dbReference>
<dbReference type="OrthoDB" id="9801753at2"/>
<dbReference type="PhylomeDB" id="Q3IYY9"/>
<dbReference type="Proteomes" id="UP000002703">
    <property type="component" value="Chromosome 1"/>
</dbReference>
<dbReference type="GO" id="GO:0005886">
    <property type="term" value="C:plasma membrane"/>
    <property type="evidence" value="ECO:0007669"/>
    <property type="project" value="UniProtKB-SubCell"/>
</dbReference>
<dbReference type="HAMAP" id="MF_00386">
    <property type="entry name" value="UPF0161_YidD"/>
    <property type="match status" value="1"/>
</dbReference>
<dbReference type="InterPro" id="IPR002696">
    <property type="entry name" value="Membr_insert_effic_factor_YidD"/>
</dbReference>
<dbReference type="NCBIfam" id="TIGR00278">
    <property type="entry name" value="membrane protein insertion efficiency factor YidD"/>
    <property type="match status" value="1"/>
</dbReference>
<dbReference type="PANTHER" id="PTHR33383">
    <property type="entry name" value="MEMBRANE PROTEIN INSERTION EFFICIENCY FACTOR-RELATED"/>
    <property type="match status" value="1"/>
</dbReference>
<dbReference type="PANTHER" id="PTHR33383:SF1">
    <property type="entry name" value="MEMBRANE PROTEIN INSERTION EFFICIENCY FACTOR-RELATED"/>
    <property type="match status" value="1"/>
</dbReference>
<dbReference type="Pfam" id="PF01809">
    <property type="entry name" value="YidD"/>
    <property type="match status" value="1"/>
</dbReference>
<dbReference type="SMART" id="SM01234">
    <property type="entry name" value="Haemolytic"/>
    <property type="match status" value="1"/>
</dbReference>
<proteinExistence type="inferred from homology"/>
<name>YIDD_CERS4</name>
<comment type="function">
    <text evidence="1">Could be involved in insertion of integral membrane proteins into the membrane.</text>
</comment>
<comment type="subcellular location">
    <subcellularLocation>
        <location evidence="1">Cell inner membrane</location>
        <topology evidence="1">Peripheral membrane protein</topology>
        <orientation evidence="1">Cytoplasmic side</orientation>
    </subcellularLocation>
</comment>
<comment type="similarity">
    <text evidence="1">Belongs to the UPF0161 family.</text>
</comment>
<sequence length="84" mass="9202">MSPLAQVLALPVRAYRLLLSPWVGHGCRYQPTCSVYALDALERHGALKGGWLAARRILSCHPWGGSGYDPVPGADPEHDRRPRG</sequence>
<accession>Q3IYY9</accession>
<reference key="1">
    <citation type="submission" date="2005-09" db="EMBL/GenBank/DDBJ databases">
        <title>Complete sequence of chromosome 1 of Rhodobacter sphaeroides 2.4.1.</title>
        <authorList>
            <person name="Copeland A."/>
            <person name="Lucas S."/>
            <person name="Lapidus A."/>
            <person name="Barry K."/>
            <person name="Detter J.C."/>
            <person name="Glavina T."/>
            <person name="Hammon N."/>
            <person name="Israni S."/>
            <person name="Pitluck S."/>
            <person name="Richardson P."/>
            <person name="Mackenzie C."/>
            <person name="Choudhary M."/>
            <person name="Larimer F."/>
            <person name="Hauser L.J."/>
            <person name="Land M."/>
            <person name="Donohue T.J."/>
            <person name="Kaplan S."/>
        </authorList>
    </citation>
    <scope>NUCLEOTIDE SEQUENCE [LARGE SCALE GENOMIC DNA]</scope>
    <source>
        <strain>ATCC 17023 / DSM 158 / JCM 6121 / CCUG 31486 / LMG 2827 / NBRC 12203 / NCIMB 8253 / ATH 2.4.1.</strain>
    </source>
</reference>
<gene>
    <name type="ordered locus">RHOS4_26770</name>
    <name type="ORF">RSP_1061</name>
</gene>
<evidence type="ECO:0000255" key="1">
    <source>
        <dbReference type="HAMAP-Rule" id="MF_00386"/>
    </source>
</evidence>
<evidence type="ECO:0000256" key="2">
    <source>
        <dbReference type="SAM" id="MobiDB-lite"/>
    </source>
</evidence>